<organism>
    <name type="scientific">Escherichia coli (strain K12)</name>
    <dbReference type="NCBI Taxonomy" id="83333"/>
    <lineage>
        <taxon>Bacteria</taxon>
        <taxon>Pseudomonadati</taxon>
        <taxon>Pseudomonadota</taxon>
        <taxon>Gammaproteobacteria</taxon>
        <taxon>Enterobacterales</taxon>
        <taxon>Enterobacteriaceae</taxon>
        <taxon>Escherichia</taxon>
    </lineage>
</organism>
<keyword id="KW-0521">NADP</keyword>
<keyword id="KW-0560">Oxidoreductase</keyword>
<keyword id="KW-1185">Reference proteome</keyword>
<reference key="1">
    <citation type="journal article" date="1996" name="DNA Res.">
        <title>A 460-kb DNA sequence of the Escherichia coli K-12 genome corresponding to the 40.1-50.0 min region on the linkage map.</title>
        <authorList>
            <person name="Itoh T."/>
            <person name="Aiba H."/>
            <person name="Baba T."/>
            <person name="Fujita K."/>
            <person name="Hayashi K."/>
            <person name="Inada T."/>
            <person name="Isono K."/>
            <person name="Kasai H."/>
            <person name="Kimura S."/>
            <person name="Kitakawa M."/>
            <person name="Kitagawa M."/>
            <person name="Makino K."/>
            <person name="Miki T."/>
            <person name="Mizobuchi K."/>
            <person name="Mori H."/>
            <person name="Mori T."/>
            <person name="Motomura K."/>
            <person name="Nakade S."/>
            <person name="Nakamura Y."/>
            <person name="Nashimoto H."/>
            <person name="Nishio Y."/>
            <person name="Oshima T."/>
            <person name="Saito N."/>
            <person name="Sampei G."/>
            <person name="Seki Y."/>
            <person name="Sivasundaram S."/>
            <person name="Tagami H."/>
            <person name="Takeda J."/>
            <person name="Takemoto K."/>
            <person name="Wada C."/>
            <person name="Yamamoto Y."/>
            <person name="Horiuchi T."/>
        </authorList>
    </citation>
    <scope>NUCLEOTIDE SEQUENCE [LARGE SCALE GENOMIC DNA]</scope>
    <source>
        <strain>K12 / W3110 / ATCC 27325 / DSM 5911</strain>
    </source>
</reference>
<reference key="2">
    <citation type="journal article" date="1997" name="Science">
        <title>The complete genome sequence of Escherichia coli K-12.</title>
        <authorList>
            <person name="Blattner F.R."/>
            <person name="Plunkett G. III"/>
            <person name="Bloch C.A."/>
            <person name="Perna N.T."/>
            <person name="Burland V."/>
            <person name="Riley M."/>
            <person name="Collado-Vides J."/>
            <person name="Glasner J.D."/>
            <person name="Rode C.K."/>
            <person name="Mayhew G.F."/>
            <person name="Gregor J."/>
            <person name="Davis N.W."/>
            <person name="Kirkpatrick H.A."/>
            <person name="Goeden M.A."/>
            <person name="Rose D.J."/>
            <person name="Mau B."/>
            <person name="Shao Y."/>
        </authorList>
    </citation>
    <scope>NUCLEOTIDE SEQUENCE [LARGE SCALE GENOMIC DNA]</scope>
    <source>
        <strain>K12 / MG1655 / ATCC 47076</strain>
    </source>
</reference>
<reference key="3">
    <citation type="journal article" date="2006" name="Mol. Syst. Biol.">
        <title>Highly accurate genome sequences of Escherichia coli K-12 strains MG1655 and W3110.</title>
        <authorList>
            <person name="Hayashi K."/>
            <person name="Morooka N."/>
            <person name="Yamamoto Y."/>
            <person name="Fujita K."/>
            <person name="Isono K."/>
            <person name="Choi S."/>
            <person name="Ohtsubo E."/>
            <person name="Baba T."/>
            <person name="Wanner B.L."/>
            <person name="Mori H."/>
            <person name="Horiuchi T."/>
        </authorList>
    </citation>
    <scope>NUCLEOTIDE SEQUENCE [LARGE SCALE GENOMIC DNA]</scope>
    <source>
        <strain>K12 / W3110 / ATCC 27325 / DSM 5911</strain>
    </source>
</reference>
<reference key="4">
    <citation type="journal article" date="2005" name="J. Bacteriol.">
        <title>Conversion of methylglyoxal to acetol by Escherichia coli aldo-keto reductases.</title>
        <authorList>
            <person name="Ko J."/>
            <person name="Kim I."/>
            <person name="Yoo S."/>
            <person name="Min B."/>
            <person name="Kim K."/>
            <person name="Park C."/>
        </authorList>
    </citation>
    <scope>FUNCTION</scope>
    <scope>CATALYTIC ACTIVITY</scope>
    <scope>BIOPHYSICOCHEMICAL PROPERTIES</scope>
    <scope>INDUCTION</scope>
    <source>
        <strain>K12 / MG1655 / ATCC 47076</strain>
    </source>
</reference>
<reference key="5">
    <citation type="journal article" date="2013" name="J. Microbiol.">
        <title>Glyoxal detoxification in Escherichia coli K-12 by NADPH dependent aldo-keto reductases.</title>
        <authorList>
            <person name="Lee C."/>
            <person name="Kim I."/>
            <person name="Park C."/>
        </authorList>
    </citation>
    <scope>FUNCTION</scope>
    <scope>CATALYTIC ACTIVITY</scope>
    <scope>BIOPHYSICOCHEMICAL PROPERTIES</scope>
    <scope>DISRUPTION PHENOTYPE</scope>
</reference>
<comment type="function">
    <text evidence="1 2">Aldo-keto reductase that contributes to cellular methylglyoxal detoxification by catalyzing the NADPH-dependent conversion of methylglyoxal to acetol (PubMed:16077126). It also exhibits activity with glyoxal and probably plays a significant role in detoxification of glyoxal in vivo (PubMed:23990306). Can also use aromatic aldehydes such as 4-nitrobenzaldehyde, 3-nitrobenzaldehyde and benzaldehyde, and phenylglyoxal (PubMed:16077126).</text>
</comment>
<comment type="catalytic activity">
    <reaction evidence="1">
        <text>hydroxyacetone + NADP(+) = methylglyoxal + NADPH + H(+)</text>
        <dbReference type="Rhea" id="RHEA:27986"/>
        <dbReference type="ChEBI" id="CHEBI:15378"/>
        <dbReference type="ChEBI" id="CHEBI:17158"/>
        <dbReference type="ChEBI" id="CHEBI:27957"/>
        <dbReference type="ChEBI" id="CHEBI:57783"/>
        <dbReference type="ChEBI" id="CHEBI:58349"/>
    </reaction>
</comment>
<comment type="catalytic activity">
    <reaction evidence="1 2">
        <text>a primary alcohol + NADP(+) = an aldehyde + NADPH + H(+)</text>
        <dbReference type="Rhea" id="RHEA:15937"/>
        <dbReference type="ChEBI" id="CHEBI:15378"/>
        <dbReference type="ChEBI" id="CHEBI:15734"/>
        <dbReference type="ChEBI" id="CHEBI:17478"/>
        <dbReference type="ChEBI" id="CHEBI:57783"/>
        <dbReference type="ChEBI" id="CHEBI:58349"/>
        <dbReference type="EC" id="1.1.1.2"/>
    </reaction>
</comment>
<comment type="biophysicochemical properties">
    <kinetics>
        <KM evidence="1">2.09 mM for methylglyoxal</KM>
        <KM evidence="2">10 mM for glyoxal</KM>
        <KM evidence="2">7 mM for glycolaldehyde</KM>
        <text evidence="1 2">kcat is 171 min(-1) with methylglyoxal as substrate (PubMed:16077126). kcat is 15 min(-1) with glyoxal as substrate (PubMed:23990306). kcat is 15 min(-1) with glycolaldehyde as substrate (PubMed:23990306).</text>
    </kinetics>
</comment>
<comment type="induction">
    <text evidence="1">Expression is not significantly altered upon methylglyoxal addition.</text>
</comment>
<comment type="disruption phenotype">
    <text evidence="2">The deletion mutant shows sensitivity to glyoxal.</text>
</comment>
<comment type="similarity">
    <text evidence="3">Belongs to the aldo/keto reductase family.</text>
</comment>
<proteinExistence type="evidence at protein level"/>
<gene>
    <name type="primary">yeaE</name>
    <name type="ordered locus">b1781</name>
    <name type="ordered locus">JW1770</name>
</gene>
<evidence type="ECO:0000269" key="1">
    <source>
    </source>
</evidence>
<evidence type="ECO:0000269" key="2">
    <source>
    </source>
</evidence>
<evidence type="ECO:0000305" key="3"/>
<dbReference type="EC" id="1.1.1.-" evidence="1"/>
<dbReference type="EC" id="1.1.1.2" evidence="1 2"/>
<dbReference type="EMBL" id="U00096">
    <property type="protein sequence ID" value="AAC74851.1"/>
    <property type="molecule type" value="Genomic_DNA"/>
</dbReference>
<dbReference type="EMBL" id="AP009048">
    <property type="protein sequence ID" value="BAA15578.2"/>
    <property type="molecule type" value="Genomic_DNA"/>
</dbReference>
<dbReference type="PIR" id="E64938">
    <property type="entry name" value="E64938"/>
</dbReference>
<dbReference type="RefSeq" id="NP_416295.1">
    <property type="nucleotide sequence ID" value="NC_000913.3"/>
</dbReference>
<dbReference type="RefSeq" id="WP_001186371.1">
    <property type="nucleotide sequence ID" value="NZ_SSZK01000001.1"/>
</dbReference>
<dbReference type="SMR" id="P76234"/>
<dbReference type="BioGRID" id="4260310">
    <property type="interactions" value="23"/>
</dbReference>
<dbReference type="FunCoup" id="P76234">
    <property type="interactions" value="52"/>
</dbReference>
<dbReference type="IntAct" id="P76234">
    <property type="interactions" value="4"/>
</dbReference>
<dbReference type="STRING" id="511145.b1781"/>
<dbReference type="jPOST" id="P76234"/>
<dbReference type="PaxDb" id="511145-b1781"/>
<dbReference type="EnsemblBacteria" id="AAC74851">
    <property type="protein sequence ID" value="AAC74851"/>
    <property type="gene ID" value="b1781"/>
</dbReference>
<dbReference type="GeneID" id="946302"/>
<dbReference type="KEGG" id="ecj:JW1770"/>
<dbReference type="KEGG" id="eco:b1781"/>
<dbReference type="KEGG" id="ecoc:C3026_10160"/>
<dbReference type="PATRIC" id="fig|1411691.4.peg.473"/>
<dbReference type="EchoBASE" id="EB3264"/>
<dbReference type="eggNOG" id="COG0656">
    <property type="taxonomic scope" value="Bacteria"/>
</dbReference>
<dbReference type="InParanoid" id="P76234"/>
<dbReference type="OMA" id="ACATNQV"/>
<dbReference type="OrthoDB" id="9772407at2"/>
<dbReference type="PhylomeDB" id="P76234"/>
<dbReference type="BioCyc" id="EcoCyc:G6967-MONOMER"/>
<dbReference type="BioCyc" id="MetaCyc:G6967-MONOMER"/>
<dbReference type="SABIO-RK" id="P76234"/>
<dbReference type="PRO" id="PR:P76234"/>
<dbReference type="Proteomes" id="UP000000625">
    <property type="component" value="Chromosome"/>
</dbReference>
<dbReference type="GO" id="GO:0016491">
    <property type="term" value="F:oxidoreductase activity"/>
    <property type="evidence" value="ECO:0000314"/>
    <property type="project" value="EcoCyc"/>
</dbReference>
<dbReference type="GO" id="GO:0051596">
    <property type="term" value="P:methylglyoxal catabolic process"/>
    <property type="evidence" value="ECO:0000314"/>
    <property type="project" value="EcoCyc"/>
</dbReference>
<dbReference type="CDD" id="cd19138">
    <property type="entry name" value="AKR_YeaE"/>
    <property type="match status" value="1"/>
</dbReference>
<dbReference type="FunFam" id="3.20.20.100:FF:000028">
    <property type="entry name" value="Oxidoreductase, aldo/keto reductase family"/>
    <property type="match status" value="1"/>
</dbReference>
<dbReference type="Gene3D" id="3.20.20.100">
    <property type="entry name" value="NADP-dependent oxidoreductase domain"/>
    <property type="match status" value="1"/>
</dbReference>
<dbReference type="InterPro" id="IPR020471">
    <property type="entry name" value="AKR"/>
</dbReference>
<dbReference type="InterPro" id="IPR023210">
    <property type="entry name" value="NADP_OxRdtase_dom"/>
</dbReference>
<dbReference type="InterPro" id="IPR036812">
    <property type="entry name" value="NADP_OxRdtase_dom_sf"/>
</dbReference>
<dbReference type="PANTHER" id="PTHR43638:SF3">
    <property type="entry name" value="ALDEHYDE REDUCTASE"/>
    <property type="match status" value="1"/>
</dbReference>
<dbReference type="PANTHER" id="PTHR43638">
    <property type="entry name" value="OXIDOREDUCTASE, ALDO/KETO REDUCTASE FAMILY PROTEIN"/>
    <property type="match status" value="1"/>
</dbReference>
<dbReference type="Pfam" id="PF00248">
    <property type="entry name" value="Aldo_ket_red"/>
    <property type="match status" value="1"/>
</dbReference>
<dbReference type="PIRSF" id="PIRSF000097">
    <property type="entry name" value="AKR"/>
    <property type="match status" value="1"/>
</dbReference>
<dbReference type="PRINTS" id="PR00069">
    <property type="entry name" value="ALDKETRDTASE"/>
</dbReference>
<dbReference type="SUPFAM" id="SSF51430">
    <property type="entry name" value="NAD(P)-linked oxidoreductase"/>
    <property type="match status" value="1"/>
</dbReference>
<feature type="chain" id="PRO_0000201327" description="Methylglyoxal reductase YeaE">
    <location>
        <begin position="1"/>
        <end position="284"/>
    </location>
</feature>
<protein>
    <recommendedName>
        <fullName evidence="3">Methylglyoxal reductase YeaE</fullName>
        <ecNumber evidence="1">1.1.1.-</ecNumber>
    </recommendedName>
    <alternativeName>
        <fullName evidence="3">Aldo-keto reductase YeaE</fullName>
        <ecNumber evidence="1 2">1.1.1.2</ecNumber>
    </alternativeName>
</protein>
<name>YEAE_ECOLI</name>
<accession>P76234</accession>
<accession>O08473</accession>
<accession>P78175</accession>
<sequence length="284" mass="30987">MQQKMIQFSGDVSLPAVGQGTWYMGEDASQRKTEVAALRAGIELGLTLIDTAEMYADGGAEKVVGEALTGLREKVFLVSKVYPWNAGGQKAINACEASLRRLNTDYLDLYLLHWSGSFAFEETVAAMEKLIAQGKIRRWGVSNLDYADMQELWQLPGGNQCATNQVLYHLGSRGIEYDLLPWCQQQQMPVMAYSPLAQAGRLRNGLLKNAVVNEIAHAHNISAAQVLLAWVISHQGVMAIPKAATIAHVQQNAAVLEVELSSAELAMLDKAYPAPKGKTALDMV</sequence>